<organism>
    <name type="scientific">Escherichia coli O6:K15:H31 (strain 536 / UPEC)</name>
    <dbReference type="NCBI Taxonomy" id="362663"/>
    <lineage>
        <taxon>Bacteria</taxon>
        <taxon>Pseudomonadati</taxon>
        <taxon>Pseudomonadota</taxon>
        <taxon>Gammaproteobacteria</taxon>
        <taxon>Enterobacterales</taxon>
        <taxon>Enterobacteriaceae</taxon>
        <taxon>Escherichia</taxon>
    </lineage>
</organism>
<feature type="chain" id="PRO_0000344544" description="L-fucose mutarotase">
    <location>
        <begin position="1"/>
        <end position="140"/>
    </location>
</feature>
<feature type="active site" description="Proton donor" evidence="1">
    <location>
        <position position="22"/>
    </location>
</feature>
<feature type="binding site" evidence="1">
    <location>
        <position position="30"/>
    </location>
    <ligand>
        <name>substrate</name>
    </ligand>
</feature>
<feature type="binding site" evidence="1">
    <location>
        <position position="107"/>
    </location>
    <ligand>
        <name>substrate</name>
    </ligand>
</feature>
<feature type="binding site" evidence="1">
    <location>
        <begin position="129"/>
        <end position="131"/>
    </location>
    <ligand>
        <name>substrate</name>
    </ligand>
</feature>
<dbReference type="EC" id="5.1.3.29" evidence="1"/>
<dbReference type="EMBL" id="CP000247">
    <property type="protein sequence ID" value="ABG70774.1"/>
    <property type="molecule type" value="Genomic_DNA"/>
</dbReference>
<dbReference type="RefSeq" id="WP_000920840.1">
    <property type="nucleotide sequence ID" value="NC_008253.1"/>
</dbReference>
<dbReference type="SMR" id="Q0TE55"/>
<dbReference type="GeneID" id="93779194"/>
<dbReference type="KEGG" id="ecp:ECP_2787"/>
<dbReference type="HOGENOM" id="CLU_120075_1_0_6"/>
<dbReference type="UniPathway" id="UPA00956"/>
<dbReference type="Proteomes" id="UP000009182">
    <property type="component" value="Chromosome"/>
</dbReference>
<dbReference type="GO" id="GO:0005737">
    <property type="term" value="C:cytoplasm"/>
    <property type="evidence" value="ECO:0007669"/>
    <property type="project" value="UniProtKB-SubCell"/>
</dbReference>
<dbReference type="GO" id="GO:0042806">
    <property type="term" value="F:fucose binding"/>
    <property type="evidence" value="ECO:0007669"/>
    <property type="project" value="InterPro"/>
</dbReference>
<dbReference type="GO" id="GO:0036373">
    <property type="term" value="F:L-fucose mutarotase activity"/>
    <property type="evidence" value="ECO:0007669"/>
    <property type="project" value="UniProtKB-EC"/>
</dbReference>
<dbReference type="GO" id="GO:0036065">
    <property type="term" value="P:fucosylation"/>
    <property type="evidence" value="ECO:0007669"/>
    <property type="project" value="TreeGrafter"/>
</dbReference>
<dbReference type="GO" id="GO:0042354">
    <property type="term" value="P:L-fucose metabolic process"/>
    <property type="evidence" value="ECO:0007669"/>
    <property type="project" value="UniProtKB-UniRule"/>
</dbReference>
<dbReference type="FunFam" id="3.40.1650.10:FF:000001">
    <property type="entry name" value="L-fucose mutarotase"/>
    <property type="match status" value="1"/>
</dbReference>
<dbReference type="Gene3D" id="3.40.1650.10">
    <property type="entry name" value="RbsD-like domain"/>
    <property type="match status" value="1"/>
</dbReference>
<dbReference type="HAMAP" id="MF_01662">
    <property type="entry name" value="L_fucose_rotase"/>
    <property type="match status" value="1"/>
</dbReference>
<dbReference type="InterPro" id="IPR023751">
    <property type="entry name" value="L-fucose_mutarotase"/>
</dbReference>
<dbReference type="InterPro" id="IPR023750">
    <property type="entry name" value="RbsD-like_sf"/>
</dbReference>
<dbReference type="InterPro" id="IPR050443">
    <property type="entry name" value="RbsD/FucU_mutarotase"/>
</dbReference>
<dbReference type="InterPro" id="IPR007721">
    <property type="entry name" value="RbsD_FucU"/>
</dbReference>
<dbReference type="NCBIfam" id="NF011949">
    <property type="entry name" value="PRK15420.1"/>
    <property type="match status" value="1"/>
</dbReference>
<dbReference type="PANTHER" id="PTHR31690">
    <property type="entry name" value="FUCOSE MUTAROTASE"/>
    <property type="match status" value="1"/>
</dbReference>
<dbReference type="PANTHER" id="PTHR31690:SF4">
    <property type="entry name" value="FUCOSE MUTAROTASE"/>
    <property type="match status" value="1"/>
</dbReference>
<dbReference type="Pfam" id="PF05025">
    <property type="entry name" value="RbsD_FucU"/>
    <property type="match status" value="1"/>
</dbReference>
<dbReference type="SUPFAM" id="SSF102546">
    <property type="entry name" value="RbsD-like"/>
    <property type="match status" value="1"/>
</dbReference>
<comment type="function">
    <text evidence="1">Involved in the anomeric conversion of L-fucose.</text>
</comment>
<comment type="catalytic activity">
    <reaction evidence="1">
        <text>alpha-L-fucose = beta-L-fucose</text>
        <dbReference type="Rhea" id="RHEA:25580"/>
        <dbReference type="ChEBI" id="CHEBI:42548"/>
        <dbReference type="ChEBI" id="CHEBI:42589"/>
        <dbReference type="EC" id="5.1.3.29"/>
    </reaction>
</comment>
<comment type="pathway">
    <text evidence="1">Carbohydrate metabolism; L-fucose metabolism.</text>
</comment>
<comment type="subunit">
    <text evidence="1">Homodecamer.</text>
</comment>
<comment type="subcellular location">
    <subcellularLocation>
        <location evidence="1">Cytoplasm</location>
    </subcellularLocation>
</comment>
<comment type="similarity">
    <text evidence="1">Belongs to the RbsD / FucU family. FucU mutarotase subfamily.</text>
</comment>
<name>FUCM_ECOL5</name>
<evidence type="ECO:0000255" key="1">
    <source>
        <dbReference type="HAMAP-Rule" id="MF_01662"/>
    </source>
</evidence>
<accession>Q0TE55</accession>
<sequence>MLKTISPLISPELLKVLAEMGHGDEIIFSDAHFPAHSMGPQVIRADGLLVSDLLQAIIPLFELDSYAPPLVMMAAVEGDTLDPEVERRYRNALSLQAPCPDIIRINRFAFYERAQKAFAIVITGERAKYGNILLKKGVTP</sequence>
<reference key="1">
    <citation type="journal article" date="2006" name="Mol. Microbiol.">
        <title>Role of pathogenicity island-associated integrases in the genome plasticity of uropathogenic Escherichia coli strain 536.</title>
        <authorList>
            <person name="Hochhut B."/>
            <person name="Wilde C."/>
            <person name="Balling G."/>
            <person name="Middendorf B."/>
            <person name="Dobrindt U."/>
            <person name="Brzuszkiewicz E."/>
            <person name="Gottschalk G."/>
            <person name="Carniel E."/>
            <person name="Hacker J."/>
        </authorList>
    </citation>
    <scope>NUCLEOTIDE SEQUENCE [LARGE SCALE GENOMIC DNA]</scope>
    <source>
        <strain>536 / UPEC</strain>
    </source>
</reference>
<proteinExistence type="inferred from homology"/>
<keyword id="KW-0119">Carbohydrate metabolism</keyword>
<keyword id="KW-0963">Cytoplasm</keyword>
<keyword id="KW-0294">Fucose metabolism</keyword>
<keyword id="KW-0413">Isomerase</keyword>
<protein>
    <recommendedName>
        <fullName evidence="1">L-fucose mutarotase</fullName>
        <ecNumber evidence="1">5.1.3.29</ecNumber>
    </recommendedName>
    <alternativeName>
        <fullName evidence="1">Fucose 1-epimerase</fullName>
    </alternativeName>
    <alternativeName>
        <fullName evidence="1">Type-2 mutarotase</fullName>
    </alternativeName>
</protein>
<gene>
    <name evidence="1" type="primary">fucU</name>
    <name type="ordered locus">ECP_2787</name>
</gene>